<organism>
    <name type="scientific">Mycobacterium intracellulare</name>
    <dbReference type="NCBI Taxonomy" id="1767"/>
    <lineage>
        <taxon>Bacteria</taxon>
        <taxon>Bacillati</taxon>
        <taxon>Actinomycetota</taxon>
        <taxon>Actinomycetes</taxon>
        <taxon>Mycobacteriales</taxon>
        <taxon>Mycobacteriaceae</taxon>
        <taxon>Mycobacterium</taxon>
        <taxon>Mycobacterium avium complex (MAC)</taxon>
    </lineage>
</organism>
<feature type="signal peptide" evidence="2">
    <location>
        <begin position="1"/>
        <end position="28"/>
    </location>
</feature>
<feature type="chain" id="PRO_0000018219" description="27 kDa lipoprotein antigen">
    <location>
        <begin position="29"/>
        <end position="262"/>
    </location>
</feature>
<feature type="region of interest" description="Disordered" evidence="1">
    <location>
        <begin position="28"/>
        <end position="60"/>
    </location>
</feature>
<feature type="region of interest" description="Disordered" evidence="1">
    <location>
        <begin position="138"/>
        <end position="171"/>
    </location>
</feature>
<feature type="compositionally biased region" description="Low complexity" evidence="1">
    <location>
        <begin position="28"/>
        <end position="57"/>
    </location>
</feature>
<feature type="compositionally biased region" description="Low complexity" evidence="1">
    <location>
        <begin position="148"/>
        <end position="158"/>
    </location>
</feature>
<feature type="lipid moiety-binding region" description="N-palmitoyl cysteine" evidence="2">
    <location>
        <position position="29"/>
    </location>
</feature>
<feature type="lipid moiety-binding region" description="S-diacylglycerol cysteine" evidence="2">
    <location>
        <position position="29"/>
    </location>
</feature>
<sequence>MSASCAVPRLTRFAVFAVAGATALSLSACGSSNKSSSTSTSTSTSTSTVTSAAPSSTPNAEAKVSGLIASVAGNSIQVTKEDNATAAVNFTSATKITEAVPAGLPDVTQGSCLIVKPTEGSAPGQPVTAAKVKISESVNGTCPKPHESTPGGASSTPPSGSPSPAPAKPAWVRGSVASVSGDTINLTGTDASGNTTQTTVTVDDKTKYTKQTTANTEAIAPGKCLSARGTTDSGGALQATSIKLRQAVDGKCGKPKQPGQGG</sequence>
<proteinExistence type="predicted"/>
<reference key="1">
    <citation type="journal article" date="1993" name="Infect. Immun.">
        <title>Nucleotide sequence analysis and serologic characterization of a 27-kilodalton Mycobacterium intracellulare lipoprotein.</title>
        <authorList>
            <person name="Nair J."/>
            <person name="Rouse D.A."/>
            <person name="Morris S.L."/>
        </authorList>
    </citation>
    <scope>NUCLEOTIDE SEQUENCE [GENOMIC DNA]</scope>
</reference>
<name>MI43_MYCIT</name>
<protein>
    <recommendedName>
        <fullName>27 kDa lipoprotein antigen</fullName>
    </recommendedName>
    <alternativeName>
        <fullName>Mi43 antigen</fullName>
    </alternativeName>
</protein>
<evidence type="ECO:0000256" key="1">
    <source>
        <dbReference type="SAM" id="MobiDB-lite"/>
    </source>
</evidence>
<evidence type="ECO:0000305" key="2"/>
<accession>Q03490</accession>
<dbReference type="EMBL" id="L08229">
    <property type="protein sequence ID" value="AAA25364.1"/>
    <property type="molecule type" value="Genomic_DNA"/>
</dbReference>
<dbReference type="PIR" id="A49220">
    <property type="entry name" value="A49220"/>
</dbReference>
<dbReference type="GO" id="GO:0005886">
    <property type="term" value="C:plasma membrane"/>
    <property type="evidence" value="ECO:0007669"/>
    <property type="project" value="UniProtKB-SubCell"/>
</dbReference>
<dbReference type="InterPro" id="IPR043724">
    <property type="entry name" value="DUF5666"/>
</dbReference>
<dbReference type="Pfam" id="PF18914">
    <property type="entry name" value="DUF5666"/>
    <property type="match status" value="1"/>
</dbReference>
<gene>
    <name type="primary">Mi43</name>
</gene>
<comment type="subcellular location">
    <subcellularLocation>
        <location evidence="2">Cell membrane</location>
        <topology evidence="2">Lipid-anchor</topology>
    </subcellularLocation>
</comment>
<keyword id="KW-1003">Cell membrane</keyword>
<keyword id="KW-0449">Lipoprotein</keyword>
<keyword id="KW-0472">Membrane</keyword>
<keyword id="KW-0564">Palmitate</keyword>
<keyword id="KW-0732">Signal</keyword>